<organism>
    <name type="scientific">Methanocella arvoryzae (strain DSM 22066 / NBRC 105507 / MRE50)</name>
    <dbReference type="NCBI Taxonomy" id="351160"/>
    <lineage>
        <taxon>Archaea</taxon>
        <taxon>Methanobacteriati</taxon>
        <taxon>Methanobacteriota</taxon>
        <taxon>Stenosarchaea group</taxon>
        <taxon>Methanomicrobia</taxon>
        <taxon>Methanocellales</taxon>
        <taxon>Methanocellaceae</taxon>
        <taxon>Methanocella</taxon>
    </lineage>
</organism>
<dbReference type="EC" id="2.1.1.206" evidence="1"/>
<dbReference type="EMBL" id="AM114193">
    <property type="protein sequence ID" value="CAJ35253.1"/>
    <property type="molecule type" value="Genomic_DNA"/>
</dbReference>
<dbReference type="RefSeq" id="WP_012037237.1">
    <property type="nucleotide sequence ID" value="NC_009464.1"/>
</dbReference>
<dbReference type="SMR" id="Q0W8P0"/>
<dbReference type="STRING" id="351160.LRC271"/>
<dbReference type="GeneID" id="5143918"/>
<dbReference type="KEGG" id="rci:LRC271"/>
<dbReference type="PATRIC" id="fig|351160.9.peg.3000"/>
<dbReference type="eggNOG" id="arCOG01857">
    <property type="taxonomic scope" value="Archaea"/>
</dbReference>
<dbReference type="OrthoDB" id="14397at2157"/>
<dbReference type="Proteomes" id="UP000000663">
    <property type="component" value="Chromosome"/>
</dbReference>
<dbReference type="GO" id="GO:0005737">
    <property type="term" value="C:cytoplasm"/>
    <property type="evidence" value="ECO:0007669"/>
    <property type="project" value="UniProtKB-SubCell"/>
</dbReference>
<dbReference type="GO" id="GO:0106059">
    <property type="term" value="F:tRNA (cytidine(56)-2'-O)-methyltransferase activity"/>
    <property type="evidence" value="ECO:0007669"/>
    <property type="project" value="UniProtKB-EC"/>
</dbReference>
<dbReference type="GO" id="GO:0002128">
    <property type="term" value="P:tRNA nucleoside ribose methylation"/>
    <property type="evidence" value="ECO:0007669"/>
    <property type="project" value="UniProtKB-UniRule"/>
</dbReference>
<dbReference type="CDD" id="cd18083">
    <property type="entry name" value="aTrm56-like"/>
    <property type="match status" value="1"/>
</dbReference>
<dbReference type="Gene3D" id="3.40.1280.10">
    <property type="match status" value="1"/>
</dbReference>
<dbReference type="HAMAP" id="MF_00077">
    <property type="entry name" value="tRNA_methyltr_aTrm56"/>
    <property type="match status" value="1"/>
</dbReference>
<dbReference type="InterPro" id="IPR029028">
    <property type="entry name" value="Alpha/beta_knot_MTases"/>
</dbReference>
<dbReference type="InterPro" id="IPR029026">
    <property type="entry name" value="tRNA_m1G_MTases_N"/>
</dbReference>
<dbReference type="InterPro" id="IPR002845">
    <property type="entry name" value="tRNA_mtfrase_aTrm56"/>
</dbReference>
<dbReference type="NCBIfam" id="NF003048">
    <property type="entry name" value="PRK03958.1"/>
    <property type="match status" value="1"/>
</dbReference>
<dbReference type="PANTHER" id="PTHR42197">
    <property type="entry name" value="TRNA (CYTIDINE(56)-2'-O)-METHYLTRANSFERASE"/>
    <property type="match status" value="1"/>
</dbReference>
<dbReference type="PANTHER" id="PTHR42197:SF1">
    <property type="entry name" value="TRNA (CYTIDINE(56)-2'-O)-METHYLTRANSFERASE"/>
    <property type="match status" value="1"/>
</dbReference>
<dbReference type="Pfam" id="PF01994">
    <property type="entry name" value="Trm56"/>
    <property type="match status" value="1"/>
</dbReference>
<dbReference type="PIRSF" id="PIRSF016123">
    <property type="entry name" value="UCP016123"/>
    <property type="match status" value="1"/>
</dbReference>
<dbReference type="SUPFAM" id="SSF75217">
    <property type="entry name" value="alpha/beta knot"/>
    <property type="match status" value="1"/>
</dbReference>
<protein>
    <recommendedName>
        <fullName evidence="1">tRNA (cytidine(56)-2'-O)-methyltransferase</fullName>
        <ecNumber evidence="1">2.1.1.206</ecNumber>
    </recommendedName>
    <alternativeName>
        <fullName evidence="1">tRNA ribose 2'-O-methyltransferase aTrm56</fullName>
    </alternativeName>
</protein>
<keyword id="KW-0963">Cytoplasm</keyword>
<keyword id="KW-0489">Methyltransferase</keyword>
<keyword id="KW-1185">Reference proteome</keyword>
<keyword id="KW-0949">S-adenosyl-L-methionine</keyword>
<keyword id="KW-0808">Transferase</keyword>
<keyword id="KW-0819">tRNA processing</keyword>
<accession>Q0W8P0</accession>
<sequence length="178" mass="19581">MQDIVILRLGHRPERDARVTTHVGLTARALGAKGMLLTTDDKSVAESIQRVAAAWGGDFWVRAGVSYRSEIRQWKEKGGFVVHLTMYGINLPGCLEQIQEQFKGRGVMIIVGAEKVPGDIYGLADYNVAVGNQPHSEIAALALFMDKLQEGKSLMHEFKGGELKIIPSEHGKSVVKNR</sequence>
<comment type="function">
    <text evidence="1">Specifically catalyzes the AdoMet-dependent 2'-O-ribose methylation of cytidine at position 56 in tRNAs.</text>
</comment>
<comment type="catalytic activity">
    <reaction evidence="1">
        <text>cytidine(56) in tRNA + S-adenosyl-L-methionine = 2'-O-methylcytidine(56) in tRNA + S-adenosyl-L-homocysteine + H(+)</text>
        <dbReference type="Rhea" id="RHEA:42968"/>
        <dbReference type="Rhea" id="RHEA-COMP:10308"/>
        <dbReference type="Rhea" id="RHEA-COMP:10309"/>
        <dbReference type="ChEBI" id="CHEBI:15378"/>
        <dbReference type="ChEBI" id="CHEBI:57856"/>
        <dbReference type="ChEBI" id="CHEBI:59789"/>
        <dbReference type="ChEBI" id="CHEBI:74495"/>
        <dbReference type="ChEBI" id="CHEBI:82748"/>
        <dbReference type="EC" id="2.1.1.206"/>
    </reaction>
</comment>
<comment type="subunit">
    <text evidence="1">Homodimer.</text>
</comment>
<comment type="subcellular location">
    <subcellularLocation>
        <location evidence="1">Cytoplasm</location>
    </subcellularLocation>
</comment>
<comment type="similarity">
    <text evidence="1">Belongs to the aTrm56 family.</text>
</comment>
<reference key="1">
    <citation type="journal article" date="2006" name="Science">
        <title>Genome of rice cluster I archaea -- the key methane producers in the rice rhizosphere.</title>
        <authorList>
            <person name="Erkel C."/>
            <person name="Kube M."/>
            <person name="Reinhardt R."/>
            <person name="Liesack W."/>
        </authorList>
    </citation>
    <scope>NUCLEOTIDE SEQUENCE [LARGE SCALE GENOMIC DNA]</scope>
    <source>
        <strain>DSM 22066 / NBRC 105507 / MRE50</strain>
    </source>
</reference>
<name>TRM56_METAR</name>
<gene>
    <name type="ordered locus">UNCMA_29220</name>
    <name type="ORF">LRC271</name>
</gene>
<feature type="chain" id="PRO_0000365324" description="tRNA (cytidine(56)-2'-O)-methyltransferase">
    <location>
        <begin position="1"/>
        <end position="178"/>
    </location>
</feature>
<feature type="binding site" evidence="1">
    <location>
        <position position="84"/>
    </location>
    <ligand>
        <name>S-adenosyl-L-methionine</name>
        <dbReference type="ChEBI" id="CHEBI:59789"/>
    </ligand>
</feature>
<feature type="binding site" evidence="1">
    <location>
        <begin position="112"/>
        <end position="116"/>
    </location>
    <ligand>
        <name>S-adenosyl-L-methionine</name>
        <dbReference type="ChEBI" id="CHEBI:59789"/>
    </ligand>
</feature>
<feature type="binding site" evidence="1">
    <location>
        <begin position="130"/>
        <end position="137"/>
    </location>
    <ligand>
        <name>S-adenosyl-L-methionine</name>
        <dbReference type="ChEBI" id="CHEBI:59789"/>
    </ligand>
</feature>
<evidence type="ECO:0000255" key="1">
    <source>
        <dbReference type="HAMAP-Rule" id="MF_00077"/>
    </source>
</evidence>
<proteinExistence type="inferred from homology"/>